<name>HSLU_RHIE6</name>
<gene>
    <name evidence="1" type="primary">hslU</name>
    <name type="ordered locus">RHECIAT_CH0000052</name>
</gene>
<dbReference type="EMBL" id="CP001074">
    <property type="protein sequence ID" value="ACE89055.1"/>
    <property type="molecule type" value="Genomic_DNA"/>
</dbReference>
<dbReference type="SMR" id="B3PWI7"/>
<dbReference type="KEGG" id="rec:RHECIAT_CH0000052"/>
<dbReference type="eggNOG" id="COG1220">
    <property type="taxonomic scope" value="Bacteria"/>
</dbReference>
<dbReference type="HOGENOM" id="CLU_033123_0_0_5"/>
<dbReference type="Proteomes" id="UP000008817">
    <property type="component" value="Chromosome"/>
</dbReference>
<dbReference type="GO" id="GO:0009376">
    <property type="term" value="C:HslUV protease complex"/>
    <property type="evidence" value="ECO:0007669"/>
    <property type="project" value="UniProtKB-UniRule"/>
</dbReference>
<dbReference type="GO" id="GO:0005524">
    <property type="term" value="F:ATP binding"/>
    <property type="evidence" value="ECO:0007669"/>
    <property type="project" value="UniProtKB-UniRule"/>
</dbReference>
<dbReference type="GO" id="GO:0016887">
    <property type="term" value="F:ATP hydrolysis activity"/>
    <property type="evidence" value="ECO:0007669"/>
    <property type="project" value="InterPro"/>
</dbReference>
<dbReference type="GO" id="GO:0008233">
    <property type="term" value="F:peptidase activity"/>
    <property type="evidence" value="ECO:0007669"/>
    <property type="project" value="InterPro"/>
</dbReference>
<dbReference type="GO" id="GO:0036402">
    <property type="term" value="F:proteasome-activating activity"/>
    <property type="evidence" value="ECO:0007669"/>
    <property type="project" value="UniProtKB-UniRule"/>
</dbReference>
<dbReference type="GO" id="GO:0043335">
    <property type="term" value="P:protein unfolding"/>
    <property type="evidence" value="ECO:0007669"/>
    <property type="project" value="UniProtKB-UniRule"/>
</dbReference>
<dbReference type="GO" id="GO:0051603">
    <property type="term" value="P:proteolysis involved in protein catabolic process"/>
    <property type="evidence" value="ECO:0007669"/>
    <property type="project" value="TreeGrafter"/>
</dbReference>
<dbReference type="CDD" id="cd19498">
    <property type="entry name" value="RecA-like_HslU"/>
    <property type="match status" value="1"/>
</dbReference>
<dbReference type="FunFam" id="3.40.50.300:FF:000213">
    <property type="entry name" value="ATP-dependent protease ATPase subunit HslU"/>
    <property type="match status" value="1"/>
</dbReference>
<dbReference type="FunFam" id="3.40.50.300:FF:000220">
    <property type="entry name" value="ATP-dependent protease ATPase subunit HslU"/>
    <property type="match status" value="1"/>
</dbReference>
<dbReference type="Gene3D" id="1.10.8.60">
    <property type="match status" value="1"/>
</dbReference>
<dbReference type="Gene3D" id="3.40.50.300">
    <property type="entry name" value="P-loop containing nucleotide triphosphate hydrolases"/>
    <property type="match status" value="2"/>
</dbReference>
<dbReference type="HAMAP" id="MF_00249">
    <property type="entry name" value="HslU"/>
    <property type="match status" value="1"/>
</dbReference>
<dbReference type="InterPro" id="IPR003593">
    <property type="entry name" value="AAA+_ATPase"/>
</dbReference>
<dbReference type="InterPro" id="IPR050052">
    <property type="entry name" value="ATP-dep_Clp_protease_ClpX"/>
</dbReference>
<dbReference type="InterPro" id="IPR003959">
    <property type="entry name" value="ATPase_AAA_core"/>
</dbReference>
<dbReference type="InterPro" id="IPR019489">
    <property type="entry name" value="Clp_ATPase_C"/>
</dbReference>
<dbReference type="InterPro" id="IPR004491">
    <property type="entry name" value="HslU"/>
</dbReference>
<dbReference type="InterPro" id="IPR027417">
    <property type="entry name" value="P-loop_NTPase"/>
</dbReference>
<dbReference type="NCBIfam" id="TIGR00390">
    <property type="entry name" value="hslU"/>
    <property type="match status" value="1"/>
</dbReference>
<dbReference type="NCBIfam" id="NF003544">
    <property type="entry name" value="PRK05201.1"/>
    <property type="match status" value="1"/>
</dbReference>
<dbReference type="PANTHER" id="PTHR48102">
    <property type="entry name" value="ATP-DEPENDENT CLP PROTEASE ATP-BINDING SUBUNIT CLPX-LIKE, MITOCHONDRIAL-RELATED"/>
    <property type="match status" value="1"/>
</dbReference>
<dbReference type="PANTHER" id="PTHR48102:SF3">
    <property type="entry name" value="ATP-DEPENDENT PROTEASE ATPASE SUBUNIT HSLU"/>
    <property type="match status" value="1"/>
</dbReference>
<dbReference type="Pfam" id="PF00004">
    <property type="entry name" value="AAA"/>
    <property type="match status" value="1"/>
</dbReference>
<dbReference type="Pfam" id="PF07724">
    <property type="entry name" value="AAA_2"/>
    <property type="match status" value="1"/>
</dbReference>
<dbReference type="SMART" id="SM00382">
    <property type="entry name" value="AAA"/>
    <property type="match status" value="1"/>
</dbReference>
<dbReference type="SMART" id="SM01086">
    <property type="entry name" value="ClpB_D2-small"/>
    <property type="match status" value="1"/>
</dbReference>
<dbReference type="SUPFAM" id="SSF52540">
    <property type="entry name" value="P-loop containing nucleoside triphosphate hydrolases"/>
    <property type="match status" value="1"/>
</dbReference>
<sequence>MTTFSPREIVSELDRYIIGQHEAKRAVAIALRNRWRRQQLDPSLRDEVMPKNILMIGPTGVGKTEISRRLAKLAGAPFIKVEATKFTEVGYVGRDVEQIIRDLVEVGIGLVREKKRAEVQAKAHVSAEERVLDALVGTTASPATRENFRKKLRDGELDDKEIDIEVADTGSGMGGFEIPGMPGANIGVLNLSEMFGKAMGGRTKKVRTTVKASYTDLIRDESDKLIDNEVIQREAVRSTENDGIVFLDEIDKIAARDGGMGAGVSREGVQRDLLPLVEGTTVSTKYGPVKTDHILFIASGAFHVSKPSDLLPELQGRLPIRVELRPLNKEDFRRILTETEASLIRQYRALMETESLSLDFTEDAIDALADVAVHLNSSVENIGARRLQTVMERVLDDISYNAPDRSGTAITIDAAYVREHVGDLAQNTDLSRFIL</sequence>
<protein>
    <recommendedName>
        <fullName evidence="1">ATP-dependent protease ATPase subunit HslU</fullName>
    </recommendedName>
    <alternativeName>
        <fullName evidence="1">Unfoldase HslU</fullName>
    </alternativeName>
</protein>
<organism>
    <name type="scientific">Rhizobium etli (strain CIAT 652)</name>
    <dbReference type="NCBI Taxonomy" id="491916"/>
    <lineage>
        <taxon>Bacteria</taxon>
        <taxon>Pseudomonadati</taxon>
        <taxon>Pseudomonadota</taxon>
        <taxon>Alphaproteobacteria</taxon>
        <taxon>Hyphomicrobiales</taxon>
        <taxon>Rhizobiaceae</taxon>
        <taxon>Rhizobium/Agrobacterium group</taxon>
        <taxon>Rhizobium</taxon>
    </lineage>
</organism>
<evidence type="ECO:0000255" key="1">
    <source>
        <dbReference type="HAMAP-Rule" id="MF_00249"/>
    </source>
</evidence>
<feature type="chain" id="PRO_1000100964" description="ATP-dependent protease ATPase subunit HslU">
    <location>
        <begin position="1"/>
        <end position="435"/>
    </location>
</feature>
<feature type="binding site" evidence="1">
    <location>
        <position position="18"/>
    </location>
    <ligand>
        <name>ATP</name>
        <dbReference type="ChEBI" id="CHEBI:30616"/>
    </ligand>
</feature>
<feature type="binding site" evidence="1">
    <location>
        <begin position="60"/>
        <end position="65"/>
    </location>
    <ligand>
        <name>ATP</name>
        <dbReference type="ChEBI" id="CHEBI:30616"/>
    </ligand>
</feature>
<feature type="binding site" evidence="1">
    <location>
        <position position="248"/>
    </location>
    <ligand>
        <name>ATP</name>
        <dbReference type="ChEBI" id="CHEBI:30616"/>
    </ligand>
</feature>
<feature type="binding site" evidence="1">
    <location>
        <position position="313"/>
    </location>
    <ligand>
        <name>ATP</name>
        <dbReference type="ChEBI" id="CHEBI:30616"/>
    </ligand>
</feature>
<feature type="binding site" evidence="1">
    <location>
        <position position="385"/>
    </location>
    <ligand>
        <name>ATP</name>
        <dbReference type="ChEBI" id="CHEBI:30616"/>
    </ligand>
</feature>
<accession>B3PWI7</accession>
<comment type="function">
    <text evidence="1">ATPase subunit of a proteasome-like degradation complex; this subunit has chaperone activity. The binding of ATP and its subsequent hydrolysis by HslU are essential for unfolding of protein substrates subsequently hydrolyzed by HslV. HslU recognizes the N-terminal part of its protein substrates and unfolds these before they are guided to HslV for hydrolysis.</text>
</comment>
<comment type="subunit">
    <text evidence="1">A double ring-shaped homohexamer of HslV is capped on each side by a ring-shaped HslU homohexamer. The assembly of the HslU/HslV complex is dependent on binding of ATP.</text>
</comment>
<comment type="subcellular location">
    <subcellularLocation>
        <location evidence="1">Cytoplasm</location>
    </subcellularLocation>
</comment>
<comment type="similarity">
    <text evidence="1">Belongs to the ClpX chaperone family. HslU subfamily.</text>
</comment>
<proteinExistence type="inferred from homology"/>
<keyword id="KW-0067">ATP-binding</keyword>
<keyword id="KW-0143">Chaperone</keyword>
<keyword id="KW-0963">Cytoplasm</keyword>
<keyword id="KW-0547">Nucleotide-binding</keyword>
<keyword id="KW-0346">Stress response</keyword>
<reference key="1">
    <citation type="journal article" date="2010" name="Appl. Environ. Microbiol.">
        <title>Conserved symbiotic plasmid DNA sequences in the multireplicon pangenomic structure of Rhizobium etli.</title>
        <authorList>
            <person name="Gonzalez V."/>
            <person name="Acosta J.L."/>
            <person name="Santamaria R.I."/>
            <person name="Bustos P."/>
            <person name="Fernandez J.L."/>
            <person name="Hernandez Gonzalez I.L."/>
            <person name="Diaz R."/>
            <person name="Flores M."/>
            <person name="Palacios R."/>
            <person name="Mora J."/>
            <person name="Davila G."/>
        </authorList>
    </citation>
    <scope>NUCLEOTIDE SEQUENCE [LARGE SCALE GENOMIC DNA]</scope>
    <source>
        <strain>CIAT 652</strain>
    </source>
</reference>